<accession>Q6AJY9</accession>
<comment type="function">
    <text evidence="1">Involved in mRNA degradation. Catalyzes the phosphorolysis of single-stranded polyribonucleotides processively in the 3'- to 5'-direction.</text>
</comment>
<comment type="catalytic activity">
    <reaction evidence="1">
        <text>RNA(n+1) + phosphate = RNA(n) + a ribonucleoside 5'-diphosphate</text>
        <dbReference type="Rhea" id="RHEA:22096"/>
        <dbReference type="Rhea" id="RHEA-COMP:14527"/>
        <dbReference type="Rhea" id="RHEA-COMP:17342"/>
        <dbReference type="ChEBI" id="CHEBI:43474"/>
        <dbReference type="ChEBI" id="CHEBI:57930"/>
        <dbReference type="ChEBI" id="CHEBI:140395"/>
        <dbReference type="EC" id="2.7.7.8"/>
    </reaction>
</comment>
<comment type="cofactor">
    <cofactor evidence="1">
        <name>Mg(2+)</name>
        <dbReference type="ChEBI" id="CHEBI:18420"/>
    </cofactor>
</comment>
<comment type="subcellular location">
    <subcellularLocation>
        <location evidence="1">Cytoplasm</location>
    </subcellularLocation>
</comment>
<comment type="similarity">
    <text evidence="1">Belongs to the polyribonucleotide nucleotidyltransferase family.</text>
</comment>
<feature type="chain" id="PRO_0000329623" description="Polyribonucleotide nucleotidyltransferase">
    <location>
        <begin position="1"/>
        <end position="692"/>
    </location>
</feature>
<feature type="domain" description="KH" evidence="1">
    <location>
        <begin position="551"/>
        <end position="614"/>
    </location>
</feature>
<feature type="domain" description="S1 motif" evidence="1">
    <location>
        <begin position="620"/>
        <end position="688"/>
    </location>
</feature>
<feature type="binding site" evidence="1">
    <location>
        <position position="484"/>
    </location>
    <ligand>
        <name>Mg(2+)</name>
        <dbReference type="ChEBI" id="CHEBI:18420"/>
    </ligand>
</feature>
<feature type="binding site" evidence="1">
    <location>
        <position position="490"/>
    </location>
    <ligand>
        <name>Mg(2+)</name>
        <dbReference type="ChEBI" id="CHEBI:18420"/>
    </ligand>
</feature>
<proteinExistence type="inferred from homology"/>
<evidence type="ECO:0000255" key="1">
    <source>
        <dbReference type="HAMAP-Rule" id="MF_01595"/>
    </source>
</evidence>
<gene>
    <name evidence="1" type="primary">pnp</name>
    <name type="ordered locus">DP2608</name>
</gene>
<organism>
    <name type="scientific">Desulfotalea psychrophila (strain LSv54 / DSM 12343)</name>
    <dbReference type="NCBI Taxonomy" id="177439"/>
    <lineage>
        <taxon>Bacteria</taxon>
        <taxon>Pseudomonadati</taxon>
        <taxon>Thermodesulfobacteriota</taxon>
        <taxon>Desulfobulbia</taxon>
        <taxon>Desulfobulbales</taxon>
        <taxon>Desulfocapsaceae</taxon>
        <taxon>Desulfotalea</taxon>
    </lineage>
</organism>
<sequence>MFNKVEADIDGKLISIETGKLAKQASGSIVISCGGTVVLVTVVGAKTSNPNVDFLPLTIEYQEKFSAVGRVPGNYFRREIGRPSDQEVLTCRIIDRPLRPLFPEGYRSETQVIATVLSADQVNSPDVLALTGASAALSISHIPFAGPVAGGRIAYIDGKYVLNPTFAELESSSMDLMVACTRNAIVMVEGKADELSEDEILGAIFFAFENLQPLINLQDELQRANGLEKIVVESPVIDAELKAKVVEIAAAGMQKVYTTVDKLERGKVYDDLKKEVVAQLDTEEGLRASEISSLLSDFKKTYLREKTVNTGVRIGGRAWDEIRDISSETEYLPKTHGSALFTRGETQALVTATLGSERDKQRVETLNGETSRRFMLHYNFPPYCVGEARFLRGPSRRDIGHGTLATRGLEAVLPSEEDFPYAIRVVSEILESNGSSSMASVCGGSMAMMDAGVPLKRPVSGIAMGLIKEGEGVAILSDILGDEDHLGDMDFKVVGTCDGITALQMDIKIDGVSRDIMSNALDQAKRGRMHILEEMSKGIAEARAEVVEHAPKYFIHKISQDKIRDIIGPGGKIIKELSAQYDAKIEVDDSGLVKMFVANGALAEALVERVKSITAEVEVGAVYTGKVKTIKDFGAFVEILPGTDGLVHISELALERVKDVTDVVNEGDTIEVKVLDVDNRGRIRLSRKALLG</sequence>
<protein>
    <recommendedName>
        <fullName evidence="1">Polyribonucleotide nucleotidyltransferase</fullName>
        <ecNumber evidence="1">2.7.7.8</ecNumber>
    </recommendedName>
    <alternativeName>
        <fullName evidence="1">Polynucleotide phosphorylase</fullName>
        <shortName evidence="1">PNPase</shortName>
    </alternativeName>
</protein>
<reference key="1">
    <citation type="journal article" date="2004" name="Environ. Microbiol.">
        <title>The genome of Desulfotalea psychrophila, a sulfate-reducing bacterium from permanently cold Arctic sediments.</title>
        <authorList>
            <person name="Rabus R."/>
            <person name="Ruepp A."/>
            <person name="Frickey T."/>
            <person name="Rattei T."/>
            <person name="Fartmann B."/>
            <person name="Stark M."/>
            <person name="Bauer M."/>
            <person name="Zibat A."/>
            <person name="Lombardot T."/>
            <person name="Becker I."/>
            <person name="Amann J."/>
            <person name="Gellner K."/>
            <person name="Teeling H."/>
            <person name="Leuschner W.D."/>
            <person name="Gloeckner F.-O."/>
            <person name="Lupas A.N."/>
            <person name="Amann R."/>
            <person name="Klenk H.-P."/>
        </authorList>
    </citation>
    <scope>NUCLEOTIDE SEQUENCE [LARGE SCALE GENOMIC DNA]</scope>
    <source>
        <strain>DSM 12343 / LSv54</strain>
    </source>
</reference>
<keyword id="KW-0963">Cytoplasm</keyword>
<keyword id="KW-0460">Magnesium</keyword>
<keyword id="KW-0479">Metal-binding</keyword>
<keyword id="KW-0548">Nucleotidyltransferase</keyword>
<keyword id="KW-1185">Reference proteome</keyword>
<keyword id="KW-0694">RNA-binding</keyword>
<keyword id="KW-0808">Transferase</keyword>
<name>PNP_DESPS</name>
<dbReference type="EC" id="2.7.7.8" evidence="1"/>
<dbReference type="EMBL" id="CR522870">
    <property type="protein sequence ID" value="CAG37337.1"/>
    <property type="molecule type" value="Genomic_DNA"/>
</dbReference>
<dbReference type="RefSeq" id="WP_011189849.1">
    <property type="nucleotide sequence ID" value="NC_006138.1"/>
</dbReference>
<dbReference type="SMR" id="Q6AJY9"/>
<dbReference type="STRING" id="177439.DP2608"/>
<dbReference type="KEGG" id="dps:DP2608"/>
<dbReference type="eggNOG" id="COG1185">
    <property type="taxonomic scope" value="Bacteria"/>
</dbReference>
<dbReference type="HOGENOM" id="CLU_004217_2_2_7"/>
<dbReference type="OrthoDB" id="9804305at2"/>
<dbReference type="Proteomes" id="UP000000602">
    <property type="component" value="Chromosome"/>
</dbReference>
<dbReference type="GO" id="GO:0005829">
    <property type="term" value="C:cytosol"/>
    <property type="evidence" value="ECO:0007669"/>
    <property type="project" value="TreeGrafter"/>
</dbReference>
<dbReference type="GO" id="GO:0000175">
    <property type="term" value="F:3'-5'-RNA exonuclease activity"/>
    <property type="evidence" value="ECO:0007669"/>
    <property type="project" value="TreeGrafter"/>
</dbReference>
<dbReference type="GO" id="GO:0000287">
    <property type="term" value="F:magnesium ion binding"/>
    <property type="evidence" value="ECO:0007669"/>
    <property type="project" value="UniProtKB-UniRule"/>
</dbReference>
<dbReference type="GO" id="GO:0004654">
    <property type="term" value="F:polyribonucleotide nucleotidyltransferase activity"/>
    <property type="evidence" value="ECO:0007669"/>
    <property type="project" value="UniProtKB-UniRule"/>
</dbReference>
<dbReference type="GO" id="GO:0003723">
    <property type="term" value="F:RNA binding"/>
    <property type="evidence" value="ECO:0007669"/>
    <property type="project" value="UniProtKB-UniRule"/>
</dbReference>
<dbReference type="GO" id="GO:0006402">
    <property type="term" value="P:mRNA catabolic process"/>
    <property type="evidence" value="ECO:0007669"/>
    <property type="project" value="UniProtKB-UniRule"/>
</dbReference>
<dbReference type="GO" id="GO:0006396">
    <property type="term" value="P:RNA processing"/>
    <property type="evidence" value="ECO:0007669"/>
    <property type="project" value="InterPro"/>
</dbReference>
<dbReference type="CDD" id="cd02393">
    <property type="entry name" value="KH-I_PNPase"/>
    <property type="match status" value="1"/>
</dbReference>
<dbReference type="CDD" id="cd11363">
    <property type="entry name" value="RNase_PH_PNPase_1"/>
    <property type="match status" value="1"/>
</dbReference>
<dbReference type="CDD" id="cd11364">
    <property type="entry name" value="RNase_PH_PNPase_2"/>
    <property type="match status" value="1"/>
</dbReference>
<dbReference type="CDD" id="cd04472">
    <property type="entry name" value="S1_PNPase"/>
    <property type="match status" value="1"/>
</dbReference>
<dbReference type="FunFam" id="2.40.50.140:FF:000023">
    <property type="entry name" value="Polyribonucleotide nucleotidyltransferase"/>
    <property type="match status" value="1"/>
</dbReference>
<dbReference type="FunFam" id="3.30.1370.10:FF:000001">
    <property type="entry name" value="Polyribonucleotide nucleotidyltransferase"/>
    <property type="match status" value="1"/>
</dbReference>
<dbReference type="FunFam" id="3.30.230.70:FF:000001">
    <property type="entry name" value="Polyribonucleotide nucleotidyltransferase"/>
    <property type="match status" value="1"/>
</dbReference>
<dbReference type="FunFam" id="3.30.230.70:FF:000002">
    <property type="entry name" value="Polyribonucleotide nucleotidyltransferase"/>
    <property type="match status" value="1"/>
</dbReference>
<dbReference type="Gene3D" id="3.30.230.70">
    <property type="entry name" value="GHMP Kinase, N-terminal domain"/>
    <property type="match status" value="2"/>
</dbReference>
<dbReference type="Gene3D" id="3.30.1370.10">
    <property type="entry name" value="K Homology domain, type 1"/>
    <property type="match status" value="1"/>
</dbReference>
<dbReference type="Gene3D" id="2.40.50.140">
    <property type="entry name" value="Nucleic acid-binding proteins"/>
    <property type="match status" value="1"/>
</dbReference>
<dbReference type="HAMAP" id="MF_01595">
    <property type="entry name" value="PNPase"/>
    <property type="match status" value="1"/>
</dbReference>
<dbReference type="InterPro" id="IPR001247">
    <property type="entry name" value="ExoRNase_PH_dom1"/>
</dbReference>
<dbReference type="InterPro" id="IPR015847">
    <property type="entry name" value="ExoRNase_PH_dom2"/>
</dbReference>
<dbReference type="InterPro" id="IPR036345">
    <property type="entry name" value="ExoRNase_PH_dom2_sf"/>
</dbReference>
<dbReference type="InterPro" id="IPR004087">
    <property type="entry name" value="KH_dom"/>
</dbReference>
<dbReference type="InterPro" id="IPR004088">
    <property type="entry name" value="KH_dom_type_1"/>
</dbReference>
<dbReference type="InterPro" id="IPR036612">
    <property type="entry name" value="KH_dom_type_1_sf"/>
</dbReference>
<dbReference type="InterPro" id="IPR012340">
    <property type="entry name" value="NA-bd_OB-fold"/>
</dbReference>
<dbReference type="InterPro" id="IPR012162">
    <property type="entry name" value="PNPase"/>
</dbReference>
<dbReference type="InterPro" id="IPR027408">
    <property type="entry name" value="PNPase/RNase_PH_dom_sf"/>
</dbReference>
<dbReference type="InterPro" id="IPR015848">
    <property type="entry name" value="PNPase_PH_RNA-bd_bac/org-type"/>
</dbReference>
<dbReference type="InterPro" id="IPR036456">
    <property type="entry name" value="PNPase_PH_RNA-bd_sf"/>
</dbReference>
<dbReference type="InterPro" id="IPR020568">
    <property type="entry name" value="Ribosomal_Su5_D2-typ_SF"/>
</dbReference>
<dbReference type="InterPro" id="IPR003029">
    <property type="entry name" value="S1_domain"/>
</dbReference>
<dbReference type="NCBIfam" id="TIGR03591">
    <property type="entry name" value="polynuc_phos"/>
    <property type="match status" value="1"/>
</dbReference>
<dbReference type="NCBIfam" id="NF008805">
    <property type="entry name" value="PRK11824.1"/>
    <property type="match status" value="1"/>
</dbReference>
<dbReference type="PANTHER" id="PTHR11252">
    <property type="entry name" value="POLYRIBONUCLEOTIDE NUCLEOTIDYLTRANSFERASE"/>
    <property type="match status" value="1"/>
</dbReference>
<dbReference type="PANTHER" id="PTHR11252:SF0">
    <property type="entry name" value="POLYRIBONUCLEOTIDE NUCLEOTIDYLTRANSFERASE 1, MITOCHONDRIAL"/>
    <property type="match status" value="1"/>
</dbReference>
<dbReference type="Pfam" id="PF00013">
    <property type="entry name" value="KH_1"/>
    <property type="match status" value="1"/>
</dbReference>
<dbReference type="Pfam" id="PF03726">
    <property type="entry name" value="PNPase"/>
    <property type="match status" value="1"/>
</dbReference>
<dbReference type="Pfam" id="PF01138">
    <property type="entry name" value="RNase_PH"/>
    <property type="match status" value="2"/>
</dbReference>
<dbReference type="Pfam" id="PF03725">
    <property type="entry name" value="RNase_PH_C"/>
    <property type="match status" value="2"/>
</dbReference>
<dbReference type="Pfam" id="PF00575">
    <property type="entry name" value="S1"/>
    <property type="match status" value="1"/>
</dbReference>
<dbReference type="PIRSF" id="PIRSF005499">
    <property type="entry name" value="PNPase"/>
    <property type="match status" value="1"/>
</dbReference>
<dbReference type="SMART" id="SM00322">
    <property type="entry name" value="KH"/>
    <property type="match status" value="1"/>
</dbReference>
<dbReference type="SMART" id="SM00316">
    <property type="entry name" value="S1"/>
    <property type="match status" value="1"/>
</dbReference>
<dbReference type="SUPFAM" id="SSF54791">
    <property type="entry name" value="Eukaryotic type KH-domain (KH-domain type I)"/>
    <property type="match status" value="1"/>
</dbReference>
<dbReference type="SUPFAM" id="SSF50249">
    <property type="entry name" value="Nucleic acid-binding proteins"/>
    <property type="match status" value="1"/>
</dbReference>
<dbReference type="SUPFAM" id="SSF46915">
    <property type="entry name" value="Polynucleotide phosphorylase/guanosine pentaphosphate synthase (PNPase/GPSI), domain 3"/>
    <property type="match status" value="1"/>
</dbReference>
<dbReference type="SUPFAM" id="SSF55666">
    <property type="entry name" value="Ribonuclease PH domain 2-like"/>
    <property type="match status" value="2"/>
</dbReference>
<dbReference type="SUPFAM" id="SSF54211">
    <property type="entry name" value="Ribosomal protein S5 domain 2-like"/>
    <property type="match status" value="2"/>
</dbReference>
<dbReference type="PROSITE" id="PS50084">
    <property type="entry name" value="KH_TYPE_1"/>
    <property type="match status" value="1"/>
</dbReference>
<dbReference type="PROSITE" id="PS50126">
    <property type="entry name" value="S1"/>
    <property type="match status" value="1"/>
</dbReference>